<gene>
    <name evidence="1" type="primary">secY</name>
    <name type="ordered locus">Sca_1715</name>
</gene>
<reference key="1">
    <citation type="journal article" date="1992" name="Mol. Gen. Genet.">
        <title>Cloning and molecular characterization of the secY genes from Bacillus licheniformis and Staphylococcus carnosus: comparative analysis of nine members of the SecY family.</title>
        <authorList>
            <person name="Tschauder S."/>
            <person name="Driessen A.J.M."/>
            <person name="Freudl R."/>
        </authorList>
    </citation>
    <scope>NUCLEOTIDE SEQUENCE [GENOMIC DNA]</scope>
    <source>
        <strain>TM300</strain>
    </source>
</reference>
<reference key="2">
    <citation type="journal article" date="2009" name="Appl. Environ. Microbiol.">
        <title>Genome analysis of the meat starter culture bacterium Staphylococcus carnosus TM300.</title>
        <authorList>
            <person name="Rosenstein R."/>
            <person name="Nerz C."/>
            <person name="Biswas L."/>
            <person name="Resch A."/>
            <person name="Raddatz G."/>
            <person name="Schuster S.C."/>
            <person name="Goetz F."/>
        </authorList>
    </citation>
    <scope>NUCLEOTIDE SEQUENCE [LARGE SCALE GENOMIC DNA]</scope>
    <source>
        <strain>TM300</strain>
    </source>
</reference>
<proteinExistence type="inferred from homology"/>
<name>SECY_STACT</name>
<feature type="chain" id="PRO_0000131747" description="Protein translocase subunit SecY">
    <location>
        <begin position="1"/>
        <end position="430"/>
    </location>
</feature>
<feature type="transmembrane region" description="Helical" evidence="1">
    <location>
        <begin position="18"/>
        <end position="38"/>
    </location>
</feature>
<feature type="transmembrane region" description="Helical" evidence="1">
    <location>
        <begin position="68"/>
        <end position="88"/>
    </location>
</feature>
<feature type="transmembrane region" description="Helical" evidence="1">
    <location>
        <begin position="117"/>
        <end position="137"/>
    </location>
</feature>
<feature type="transmembrane region" description="Helical" evidence="1">
    <location>
        <begin position="148"/>
        <end position="168"/>
    </location>
</feature>
<feature type="transmembrane region" description="Helical" evidence="1">
    <location>
        <begin position="179"/>
        <end position="199"/>
    </location>
</feature>
<feature type="transmembrane region" description="Helical" evidence="1">
    <location>
        <begin position="215"/>
        <end position="235"/>
    </location>
</feature>
<feature type="transmembrane region" description="Helical" evidence="1">
    <location>
        <begin position="270"/>
        <end position="290"/>
    </location>
</feature>
<feature type="transmembrane region" description="Helical" evidence="1">
    <location>
        <begin position="308"/>
        <end position="328"/>
    </location>
</feature>
<feature type="transmembrane region" description="Helical" evidence="1">
    <location>
        <begin position="368"/>
        <end position="388"/>
    </location>
</feature>
<feature type="transmembrane region" description="Helical" evidence="1">
    <location>
        <begin position="390"/>
        <end position="410"/>
    </location>
</feature>
<feature type="sequence conflict" description="In Ref. 1; CAA49691." evidence="2" ref="1">
    <original>F</original>
    <variation>I</variation>
    <location>
        <position position="5"/>
    </location>
</feature>
<feature type="sequence conflict" description="In Ref. 1; CAA49691." evidence="2" ref="1">
    <original>T</original>
    <variation>S</variation>
    <location>
        <position position="211"/>
    </location>
</feature>
<sequence>MFETFVNFFKTKEVRNKIFFTLAMLVIFKIGTYIPAPGVNPAAFDNNQGSQGVTDLLNTFGGGALKNFSIFAMGIMPYITASIVMQLLQMDIVPKFTEWAKQGDVGRKKLNNVTRYFAIILAFIQSIGMAFQFNNYLKGALIIDPSPMSYLLIAIVLTTGTAFLLWLGEQITQYGVGNGISIIIFAGILSTLPSSLIQFYQQAFVGQSDTTMAWLQVAGLVIGLVLLTMGAVYVLQAVRKIPIQYAKKQSTQRLGSNATYLPLKVNSAGVIPVIFAMAFFLLPRTLTMFFPKADWAQQIANTANPSSNIGMVIYIILIIAFTYFYAFVQVNPEKMSDNLKKQGSYVPGIRPGEQTKKYITKVLYRLTFVGSIFLAVIAILPILATKFMNLPQSIQVGGTSLLIVIGVAIETMKSLEAQVNQKEYKGFGGR</sequence>
<protein>
    <recommendedName>
        <fullName evidence="1">Protein translocase subunit SecY</fullName>
    </recommendedName>
</protein>
<comment type="function">
    <text evidence="1">The central subunit of the protein translocation channel SecYEG. Consists of two halves formed by TMs 1-5 and 6-10. These two domains form a lateral gate at the front which open onto the bilayer between TMs 2 and 7, and are clamped together by SecE at the back. The channel is closed by both a pore ring composed of hydrophobic SecY resides and a short helix (helix 2A) on the extracellular side of the membrane which forms a plug. The plug probably moves laterally to allow the channel to open. The ring and the pore may move independently.</text>
</comment>
<comment type="subunit">
    <text evidence="1">Component of the Sec protein translocase complex. Heterotrimer consisting of SecY, SecE and SecG subunits. The heterotrimers can form oligomers, although 1 heterotrimer is thought to be able to translocate proteins. Interacts with the ribosome. Interacts with SecDF, and other proteins may be involved. Interacts with SecA.</text>
</comment>
<comment type="subcellular location">
    <subcellularLocation>
        <location evidence="1">Cell membrane</location>
        <topology evidence="1">Multi-pass membrane protein</topology>
    </subcellularLocation>
</comment>
<comment type="similarity">
    <text evidence="1">Belongs to the SecY/SEC61-alpha family.</text>
</comment>
<accession>Q05217</accession>
<accession>B9DM43</accession>
<evidence type="ECO:0000255" key="1">
    <source>
        <dbReference type="HAMAP-Rule" id="MF_01465"/>
    </source>
</evidence>
<evidence type="ECO:0000305" key="2"/>
<dbReference type="EMBL" id="X70086">
    <property type="protein sequence ID" value="CAA49691.1"/>
    <property type="molecule type" value="Genomic_DNA"/>
</dbReference>
<dbReference type="EMBL" id="AM295250">
    <property type="protein sequence ID" value="CAL28621.1"/>
    <property type="molecule type" value="Genomic_DNA"/>
</dbReference>
<dbReference type="PIR" id="S30115">
    <property type="entry name" value="S30115"/>
</dbReference>
<dbReference type="RefSeq" id="WP_015900959.1">
    <property type="nucleotide sequence ID" value="NC_012121.1"/>
</dbReference>
<dbReference type="SMR" id="Q05217"/>
<dbReference type="GeneID" id="93794174"/>
<dbReference type="KEGG" id="sca:SCA_1715"/>
<dbReference type="eggNOG" id="COG0201">
    <property type="taxonomic scope" value="Bacteria"/>
</dbReference>
<dbReference type="HOGENOM" id="CLU_030313_0_1_9"/>
<dbReference type="OrthoDB" id="9809248at2"/>
<dbReference type="BioCyc" id="SCAR396513:SCA_RS08740-MONOMER"/>
<dbReference type="Proteomes" id="UP000000444">
    <property type="component" value="Chromosome"/>
</dbReference>
<dbReference type="GO" id="GO:0005886">
    <property type="term" value="C:plasma membrane"/>
    <property type="evidence" value="ECO:0007669"/>
    <property type="project" value="UniProtKB-SubCell"/>
</dbReference>
<dbReference type="GO" id="GO:0065002">
    <property type="term" value="P:intracellular protein transmembrane transport"/>
    <property type="evidence" value="ECO:0007669"/>
    <property type="project" value="UniProtKB-UniRule"/>
</dbReference>
<dbReference type="GO" id="GO:0006605">
    <property type="term" value="P:protein targeting"/>
    <property type="evidence" value="ECO:0007669"/>
    <property type="project" value="UniProtKB-UniRule"/>
</dbReference>
<dbReference type="GO" id="GO:0043952">
    <property type="term" value="P:protein transport by the Sec complex"/>
    <property type="evidence" value="ECO:0007669"/>
    <property type="project" value="UniProtKB-UniRule"/>
</dbReference>
<dbReference type="FunFam" id="1.10.3370.10:FF:000001">
    <property type="entry name" value="Preprotein translocase subunit SecY"/>
    <property type="match status" value="1"/>
</dbReference>
<dbReference type="Gene3D" id="1.10.3370.10">
    <property type="entry name" value="SecY subunit domain"/>
    <property type="match status" value="1"/>
</dbReference>
<dbReference type="HAMAP" id="MF_01465">
    <property type="entry name" value="SecY"/>
    <property type="match status" value="1"/>
</dbReference>
<dbReference type="InterPro" id="IPR026593">
    <property type="entry name" value="SecY"/>
</dbReference>
<dbReference type="InterPro" id="IPR002208">
    <property type="entry name" value="SecY/SEC61-alpha"/>
</dbReference>
<dbReference type="InterPro" id="IPR030659">
    <property type="entry name" value="SecY_CS"/>
</dbReference>
<dbReference type="InterPro" id="IPR023201">
    <property type="entry name" value="SecY_dom_sf"/>
</dbReference>
<dbReference type="NCBIfam" id="TIGR00967">
    <property type="entry name" value="3a0501s007"/>
    <property type="match status" value="1"/>
</dbReference>
<dbReference type="PANTHER" id="PTHR10906">
    <property type="entry name" value="SECY/SEC61-ALPHA FAMILY MEMBER"/>
    <property type="match status" value="1"/>
</dbReference>
<dbReference type="Pfam" id="PF00344">
    <property type="entry name" value="SecY"/>
    <property type="match status" value="1"/>
</dbReference>
<dbReference type="PIRSF" id="PIRSF004557">
    <property type="entry name" value="SecY"/>
    <property type="match status" value="1"/>
</dbReference>
<dbReference type="PRINTS" id="PR00303">
    <property type="entry name" value="SECYTRNLCASE"/>
</dbReference>
<dbReference type="SUPFAM" id="SSF103491">
    <property type="entry name" value="Preprotein translocase SecY subunit"/>
    <property type="match status" value="1"/>
</dbReference>
<dbReference type="PROSITE" id="PS00755">
    <property type="entry name" value="SECY_1"/>
    <property type="match status" value="1"/>
</dbReference>
<dbReference type="PROSITE" id="PS00756">
    <property type="entry name" value="SECY_2"/>
    <property type="match status" value="1"/>
</dbReference>
<organism>
    <name type="scientific">Staphylococcus carnosus (strain TM300)</name>
    <dbReference type="NCBI Taxonomy" id="396513"/>
    <lineage>
        <taxon>Bacteria</taxon>
        <taxon>Bacillati</taxon>
        <taxon>Bacillota</taxon>
        <taxon>Bacilli</taxon>
        <taxon>Bacillales</taxon>
        <taxon>Staphylococcaceae</taxon>
        <taxon>Staphylococcus</taxon>
    </lineage>
</organism>
<keyword id="KW-1003">Cell membrane</keyword>
<keyword id="KW-0472">Membrane</keyword>
<keyword id="KW-0653">Protein transport</keyword>
<keyword id="KW-1185">Reference proteome</keyword>
<keyword id="KW-0811">Translocation</keyword>
<keyword id="KW-0812">Transmembrane</keyword>
<keyword id="KW-1133">Transmembrane helix</keyword>
<keyword id="KW-0813">Transport</keyword>